<gene>
    <name type="primary">CSLG2</name>
    <name type="ordered locus">At4g24000</name>
    <name type="ORF">T19F6.18</name>
    <name type="ORF">T32A16.170</name>
</gene>
<organism>
    <name type="scientific">Arabidopsis thaliana</name>
    <name type="common">Mouse-ear cress</name>
    <dbReference type="NCBI Taxonomy" id="3702"/>
    <lineage>
        <taxon>Eukaryota</taxon>
        <taxon>Viridiplantae</taxon>
        <taxon>Streptophyta</taxon>
        <taxon>Embryophyta</taxon>
        <taxon>Tracheophyta</taxon>
        <taxon>Spermatophyta</taxon>
        <taxon>Magnoliopsida</taxon>
        <taxon>eudicotyledons</taxon>
        <taxon>Gunneridae</taxon>
        <taxon>Pentapetalae</taxon>
        <taxon>rosids</taxon>
        <taxon>malvids</taxon>
        <taxon>Brassicales</taxon>
        <taxon>Brassicaceae</taxon>
        <taxon>Camelineae</taxon>
        <taxon>Arabidopsis</taxon>
    </lineage>
</organism>
<name>CSLG2_ARATH</name>
<keyword id="KW-0961">Cell wall biogenesis/degradation</keyword>
<keyword id="KW-0328">Glycosyltransferase</keyword>
<keyword id="KW-0333">Golgi apparatus</keyword>
<keyword id="KW-0472">Membrane</keyword>
<keyword id="KW-1185">Reference proteome</keyword>
<keyword id="KW-0808">Transferase</keyword>
<keyword id="KW-0812">Transmembrane</keyword>
<keyword id="KW-1133">Transmembrane helix</keyword>
<proteinExistence type="evidence at transcript level"/>
<protein>
    <recommendedName>
        <fullName>Cellulose synthase-like protein G2</fullName>
        <shortName>AtCslG2</shortName>
        <ecNumber>2.4.1.-</ecNumber>
    </recommendedName>
</protein>
<sequence length="722" mass="82120">MEPQRKHSTALHTCHPCRRTIPYRIYAVFHTCGIIALMYHHVHSIVNANNTLITCLLLLSDIVLAFMWATTTSLRLNPIHRTEYPEKYAAKPEDFPKLDVFICTADPYKEPPMMVVNTALSVMAYEYPSHKISVYVSDDGGSSLTLFALMEAAKFSKHWLPFCKNNNVQDRSPEVYFSSKSHSSSDEAENLKMMYEDMKSRVEHVVESGKVETAFIACDQFSCVFDLWTDKFTRHDHPTIIMVLQHNETEMMPNLIYVSREKSKVSPHHFKAGALNTLLRVSAVMTNSPIILTLDCDMYSNNPTTPLHALCYLSDPKINFDLGFVQFPQKFQGVNKNDIYASELKRPFDINTVGFDGLMGPVHMGTGCFFNRRAFYGPPTTLILPEIETFGPNRIADKPIKAQDILALAHDVAGCNYECNTNWGSKIGFRYGSLVEDYFTGFMLHCEGWRSIFCSPTKAAFYGDSPKCLTDVIGQQIRWSVGLLEVAFSRYNPLTYGIKPLSLLMSLGYCHYAFWPFWCIPLVVYGILPQVALIHGVSVFPKASDPWFWLYIILFLGGYAQDLSDFLLEGGTYRKWWNDQRMWMVRGLSSFFFGFTEFTLKTLNLSTQGYNVTSKSNDDNEQMKRYEQEIFDFGPSSSMFLPITTVAIMNLLAFMRGLYGIFTWGEGPVLELMLASFAVVNCLPIYEAMVLRIDDGKLPKRICFLAGLLSFVLTGSGYFFLK</sequence>
<feature type="chain" id="PRO_0000319354" description="Cellulose synthase-like protein G2">
    <location>
        <begin position="1"/>
        <end position="722"/>
    </location>
</feature>
<feature type="transmembrane region" description="Helical" evidence="1">
    <location>
        <begin position="25"/>
        <end position="45"/>
    </location>
</feature>
<feature type="transmembrane region" description="Helical" evidence="1">
    <location>
        <begin position="51"/>
        <end position="71"/>
    </location>
</feature>
<feature type="transmembrane region" description="Helical" evidence="1">
    <location>
        <begin position="514"/>
        <end position="534"/>
    </location>
</feature>
<feature type="transmembrane region" description="Helical" evidence="1">
    <location>
        <begin position="548"/>
        <end position="568"/>
    </location>
</feature>
<feature type="transmembrane region" description="Helical" evidence="1">
    <location>
        <begin position="583"/>
        <end position="605"/>
    </location>
</feature>
<feature type="transmembrane region" description="Helical" evidence="1">
    <location>
        <begin position="635"/>
        <end position="655"/>
    </location>
</feature>
<feature type="transmembrane region" description="Helical" evidence="1">
    <location>
        <begin position="660"/>
        <end position="680"/>
    </location>
</feature>
<feature type="transmembrane region" description="Helical" evidence="1">
    <location>
        <begin position="702"/>
        <end position="722"/>
    </location>
</feature>
<feature type="active site" evidence="1">
    <location>
        <position position="139"/>
    </location>
</feature>
<feature type="active site" evidence="1">
    <location>
        <position position="437"/>
    </location>
</feature>
<dbReference type="EC" id="2.4.1.-"/>
<dbReference type="EMBL" id="AC002343">
    <property type="protein sequence ID" value="AAB63623.1"/>
    <property type="status" value="ALT_SEQ"/>
    <property type="molecule type" value="Genomic_DNA"/>
</dbReference>
<dbReference type="EMBL" id="AL078468">
    <property type="protein sequence ID" value="CAB43900.1"/>
    <property type="status" value="ALT_SEQ"/>
    <property type="molecule type" value="Genomic_DNA"/>
</dbReference>
<dbReference type="EMBL" id="AL161560">
    <property type="protein sequence ID" value="CAB81318.1"/>
    <property type="status" value="ALT_SEQ"/>
    <property type="molecule type" value="Genomic_DNA"/>
</dbReference>
<dbReference type="EMBL" id="CP002687">
    <property type="protein sequence ID" value="AEE84838.1"/>
    <property type="molecule type" value="Genomic_DNA"/>
</dbReference>
<dbReference type="EMBL" id="AY070072">
    <property type="protein sequence ID" value="AAL49829.1"/>
    <property type="molecule type" value="mRNA"/>
</dbReference>
<dbReference type="EMBL" id="AY096446">
    <property type="protein sequence ID" value="AAM20086.1"/>
    <property type="molecule type" value="mRNA"/>
</dbReference>
<dbReference type="PIR" id="T08919">
    <property type="entry name" value="T08919"/>
</dbReference>
<dbReference type="RefSeq" id="NP_567692.2">
    <property type="nucleotide sequence ID" value="NM_118532.4"/>
</dbReference>
<dbReference type="SMR" id="Q8VYR4"/>
<dbReference type="FunCoup" id="Q8VYR4">
    <property type="interactions" value="6"/>
</dbReference>
<dbReference type="STRING" id="3702.Q8VYR4"/>
<dbReference type="CAZy" id="GT2">
    <property type="family name" value="Glycosyltransferase Family 2"/>
</dbReference>
<dbReference type="PaxDb" id="3702-AT4G24000.1"/>
<dbReference type="ProteomicsDB" id="224536"/>
<dbReference type="EnsemblPlants" id="AT4G24000.1">
    <property type="protein sequence ID" value="AT4G24000.1"/>
    <property type="gene ID" value="AT4G24000"/>
</dbReference>
<dbReference type="GeneID" id="828500"/>
<dbReference type="Gramene" id="AT4G24000.1">
    <property type="protein sequence ID" value="AT4G24000.1"/>
    <property type="gene ID" value="AT4G24000"/>
</dbReference>
<dbReference type="KEGG" id="ath:AT4G24000"/>
<dbReference type="Araport" id="AT4G24000"/>
<dbReference type="TAIR" id="AT4G24000">
    <property type="gene designation" value="CSLG2"/>
</dbReference>
<dbReference type="eggNOG" id="ENOG502QZE9">
    <property type="taxonomic scope" value="Eukaryota"/>
</dbReference>
<dbReference type="HOGENOM" id="CLU_001418_3_3_1"/>
<dbReference type="InParanoid" id="Q8VYR4"/>
<dbReference type="OMA" id="QDIYACE"/>
<dbReference type="PhylomeDB" id="Q8VYR4"/>
<dbReference type="BioCyc" id="ARA:AT4G24000-MONOMER"/>
<dbReference type="PRO" id="PR:Q8VYR4"/>
<dbReference type="Proteomes" id="UP000006548">
    <property type="component" value="Chromosome 4"/>
</dbReference>
<dbReference type="ExpressionAtlas" id="Q8VYR4">
    <property type="expression patterns" value="baseline and differential"/>
</dbReference>
<dbReference type="GO" id="GO:0000139">
    <property type="term" value="C:Golgi membrane"/>
    <property type="evidence" value="ECO:0007669"/>
    <property type="project" value="UniProtKB-SubCell"/>
</dbReference>
<dbReference type="GO" id="GO:0016760">
    <property type="term" value="F:cellulose synthase (UDP-forming) activity"/>
    <property type="evidence" value="ECO:0007669"/>
    <property type="project" value="InterPro"/>
</dbReference>
<dbReference type="GO" id="GO:0071555">
    <property type="term" value="P:cell wall organization"/>
    <property type="evidence" value="ECO:0007669"/>
    <property type="project" value="UniProtKB-KW"/>
</dbReference>
<dbReference type="GO" id="GO:0030244">
    <property type="term" value="P:cellulose biosynthetic process"/>
    <property type="evidence" value="ECO:0007669"/>
    <property type="project" value="InterPro"/>
</dbReference>
<dbReference type="FunFam" id="3.90.550.10:FF:000138">
    <property type="entry name" value="Cellulose synthase isolog"/>
    <property type="match status" value="1"/>
</dbReference>
<dbReference type="FunFam" id="3.90.550.10:FF:000135">
    <property type="entry name" value="Cellulose synthase-like protein G3"/>
    <property type="match status" value="1"/>
</dbReference>
<dbReference type="Gene3D" id="3.90.550.10">
    <property type="entry name" value="Spore Coat Polysaccharide Biosynthesis Protein SpsA, Chain A"/>
    <property type="match status" value="2"/>
</dbReference>
<dbReference type="InterPro" id="IPR005150">
    <property type="entry name" value="Cellulose_synth"/>
</dbReference>
<dbReference type="InterPro" id="IPR029044">
    <property type="entry name" value="Nucleotide-diphossugar_trans"/>
</dbReference>
<dbReference type="PANTHER" id="PTHR13301">
    <property type="entry name" value="X-BOX TRANSCRIPTION FACTOR-RELATED"/>
    <property type="match status" value="1"/>
</dbReference>
<dbReference type="Pfam" id="PF03552">
    <property type="entry name" value="Cellulose_synt"/>
    <property type="match status" value="2"/>
</dbReference>
<dbReference type="SUPFAM" id="SSF53448">
    <property type="entry name" value="Nucleotide-diphospho-sugar transferases"/>
    <property type="match status" value="1"/>
</dbReference>
<accession>Q8VYR4</accession>
<accession>O22989</accession>
<accession>Q9T0B3</accession>
<evidence type="ECO:0000255" key="1"/>
<evidence type="ECO:0000269" key="2">
    <source>
    </source>
</evidence>
<evidence type="ECO:0000305" key="3"/>
<reference key="1">
    <citation type="journal article" date="1999" name="Nature">
        <title>Sequence and analysis of chromosome 4 of the plant Arabidopsis thaliana.</title>
        <authorList>
            <person name="Mayer K.F.X."/>
            <person name="Schueller C."/>
            <person name="Wambutt R."/>
            <person name="Murphy G."/>
            <person name="Volckaert G."/>
            <person name="Pohl T."/>
            <person name="Duesterhoeft A."/>
            <person name="Stiekema W."/>
            <person name="Entian K.-D."/>
            <person name="Terryn N."/>
            <person name="Harris B."/>
            <person name="Ansorge W."/>
            <person name="Brandt P."/>
            <person name="Grivell L.A."/>
            <person name="Rieger M."/>
            <person name="Weichselgartner M."/>
            <person name="de Simone V."/>
            <person name="Obermaier B."/>
            <person name="Mache R."/>
            <person name="Mueller M."/>
            <person name="Kreis M."/>
            <person name="Delseny M."/>
            <person name="Puigdomenech P."/>
            <person name="Watson M."/>
            <person name="Schmidtheini T."/>
            <person name="Reichert B."/>
            <person name="Portetelle D."/>
            <person name="Perez-Alonso M."/>
            <person name="Boutry M."/>
            <person name="Bancroft I."/>
            <person name="Vos P."/>
            <person name="Hoheisel J."/>
            <person name="Zimmermann W."/>
            <person name="Wedler H."/>
            <person name="Ridley P."/>
            <person name="Langham S.-A."/>
            <person name="McCullagh B."/>
            <person name="Bilham L."/>
            <person name="Robben J."/>
            <person name="van der Schueren J."/>
            <person name="Grymonprez B."/>
            <person name="Chuang Y.-J."/>
            <person name="Vandenbussche F."/>
            <person name="Braeken M."/>
            <person name="Weltjens I."/>
            <person name="Voet M."/>
            <person name="Bastiaens I."/>
            <person name="Aert R."/>
            <person name="Defoor E."/>
            <person name="Weitzenegger T."/>
            <person name="Bothe G."/>
            <person name="Ramsperger U."/>
            <person name="Hilbert H."/>
            <person name="Braun M."/>
            <person name="Holzer E."/>
            <person name="Brandt A."/>
            <person name="Peters S."/>
            <person name="van Staveren M."/>
            <person name="Dirkse W."/>
            <person name="Mooijman P."/>
            <person name="Klein Lankhorst R."/>
            <person name="Rose M."/>
            <person name="Hauf J."/>
            <person name="Koetter P."/>
            <person name="Berneiser S."/>
            <person name="Hempel S."/>
            <person name="Feldpausch M."/>
            <person name="Lamberth S."/>
            <person name="Van den Daele H."/>
            <person name="De Keyser A."/>
            <person name="Buysshaert C."/>
            <person name="Gielen J."/>
            <person name="Villarroel R."/>
            <person name="De Clercq R."/>
            <person name="van Montagu M."/>
            <person name="Rogers J."/>
            <person name="Cronin A."/>
            <person name="Quail M.A."/>
            <person name="Bray-Allen S."/>
            <person name="Clark L."/>
            <person name="Doggett J."/>
            <person name="Hall S."/>
            <person name="Kay M."/>
            <person name="Lennard N."/>
            <person name="McLay K."/>
            <person name="Mayes R."/>
            <person name="Pettett A."/>
            <person name="Rajandream M.A."/>
            <person name="Lyne M."/>
            <person name="Benes V."/>
            <person name="Rechmann S."/>
            <person name="Borkova D."/>
            <person name="Bloecker H."/>
            <person name="Scharfe M."/>
            <person name="Grimm M."/>
            <person name="Loehnert T.-H."/>
            <person name="Dose S."/>
            <person name="de Haan M."/>
            <person name="Maarse A.C."/>
            <person name="Schaefer M."/>
            <person name="Mueller-Auer S."/>
            <person name="Gabel C."/>
            <person name="Fuchs M."/>
            <person name="Fartmann B."/>
            <person name="Granderath K."/>
            <person name="Dauner D."/>
            <person name="Herzl A."/>
            <person name="Neumann S."/>
            <person name="Argiriou A."/>
            <person name="Vitale D."/>
            <person name="Liguori R."/>
            <person name="Piravandi E."/>
            <person name="Massenet O."/>
            <person name="Quigley F."/>
            <person name="Clabauld G."/>
            <person name="Muendlein A."/>
            <person name="Felber R."/>
            <person name="Schnabl S."/>
            <person name="Hiller R."/>
            <person name="Schmidt W."/>
            <person name="Lecharny A."/>
            <person name="Aubourg S."/>
            <person name="Chefdor F."/>
            <person name="Cooke R."/>
            <person name="Berger C."/>
            <person name="Monfort A."/>
            <person name="Casacuberta E."/>
            <person name="Gibbons T."/>
            <person name="Weber N."/>
            <person name="Vandenbol M."/>
            <person name="Bargues M."/>
            <person name="Terol J."/>
            <person name="Torres A."/>
            <person name="Perez-Perez A."/>
            <person name="Purnelle B."/>
            <person name="Bent E."/>
            <person name="Johnson S."/>
            <person name="Tacon D."/>
            <person name="Jesse T."/>
            <person name="Heijnen L."/>
            <person name="Schwarz S."/>
            <person name="Scholler P."/>
            <person name="Heber S."/>
            <person name="Francs P."/>
            <person name="Bielke C."/>
            <person name="Frishman D."/>
            <person name="Haase D."/>
            <person name="Lemcke K."/>
            <person name="Mewes H.-W."/>
            <person name="Stocker S."/>
            <person name="Zaccaria P."/>
            <person name="Bevan M."/>
            <person name="Wilson R.K."/>
            <person name="de la Bastide M."/>
            <person name="Habermann K."/>
            <person name="Parnell L."/>
            <person name="Dedhia N."/>
            <person name="Gnoj L."/>
            <person name="Schutz K."/>
            <person name="Huang E."/>
            <person name="Spiegel L."/>
            <person name="Sekhon M."/>
            <person name="Murray J."/>
            <person name="Sheet P."/>
            <person name="Cordes M."/>
            <person name="Abu-Threideh J."/>
            <person name="Stoneking T."/>
            <person name="Kalicki J."/>
            <person name="Graves T."/>
            <person name="Harmon G."/>
            <person name="Edwards J."/>
            <person name="Latreille P."/>
            <person name="Courtney L."/>
            <person name="Cloud J."/>
            <person name="Abbott A."/>
            <person name="Scott K."/>
            <person name="Johnson D."/>
            <person name="Minx P."/>
            <person name="Bentley D."/>
            <person name="Fulton B."/>
            <person name="Miller N."/>
            <person name="Greco T."/>
            <person name="Kemp K."/>
            <person name="Kramer J."/>
            <person name="Fulton L."/>
            <person name="Mardis E."/>
            <person name="Dante M."/>
            <person name="Pepin K."/>
            <person name="Hillier L.W."/>
            <person name="Nelson J."/>
            <person name="Spieth J."/>
            <person name="Ryan E."/>
            <person name="Andrews S."/>
            <person name="Geisel C."/>
            <person name="Layman D."/>
            <person name="Du H."/>
            <person name="Ali J."/>
            <person name="Berghoff A."/>
            <person name="Jones K."/>
            <person name="Drone K."/>
            <person name="Cotton M."/>
            <person name="Joshu C."/>
            <person name="Antonoiu B."/>
            <person name="Zidanic M."/>
            <person name="Strong C."/>
            <person name="Sun H."/>
            <person name="Lamar B."/>
            <person name="Yordan C."/>
            <person name="Ma P."/>
            <person name="Zhong J."/>
            <person name="Preston R."/>
            <person name="Vil D."/>
            <person name="Shekher M."/>
            <person name="Matero A."/>
            <person name="Shah R."/>
            <person name="Swaby I.K."/>
            <person name="O'Shaughnessy A."/>
            <person name="Rodriguez M."/>
            <person name="Hoffman J."/>
            <person name="Till S."/>
            <person name="Granat S."/>
            <person name="Shohdy N."/>
            <person name="Hasegawa A."/>
            <person name="Hameed A."/>
            <person name="Lodhi M."/>
            <person name="Johnson A."/>
            <person name="Chen E."/>
            <person name="Marra M.A."/>
            <person name="Martienssen R."/>
            <person name="McCombie W.R."/>
        </authorList>
    </citation>
    <scope>NUCLEOTIDE SEQUENCE [LARGE SCALE GENOMIC DNA]</scope>
    <source>
        <strain>cv. Columbia</strain>
    </source>
</reference>
<reference key="2">
    <citation type="journal article" date="2017" name="Plant J.">
        <title>Araport11: a complete reannotation of the Arabidopsis thaliana reference genome.</title>
        <authorList>
            <person name="Cheng C.Y."/>
            <person name="Krishnakumar V."/>
            <person name="Chan A.P."/>
            <person name="Thibaud-Nissen F."/>
            <person name="Schobel S."/>
            <person name="Town C.D."/>
        </authorList>
    </citation>
    <scope>GENOME REANNOTATION</scope>
    <source>
        <strain>cv. Columbia</strain>
    </source>
</reference>
<reference key="3">
    <citation type="journal article" date="2003" name="Science">
        <title>Empirical analysis of transcriptional activity in the Arabidopsis genome.</title>
        <authorList>
            <person name="Yamada K."/>
            <person name="Lim J."/>
            <person name="Dale J.M."/>
            <person name="Chen H."/>
            <person name="Shinn P."/>
            <person name="Palm C.J."/>
            <person name="Southwick A.M."/>
            <person name="Wu H.C."/>
            <person name="Kim C.J."/>
            <person name="Nguyen M."/>
            <person name="Pham P.K."/>
            <person name="Cheuk R.F."/>
            <person name="Karlin-Newmann G."/>
            <person name="Liu S.X."/>
            <person name="Lam B."/>
            <person name="Sakano H."/>
            <person name="Wu T."/>
            <person name="Yu G."/>
            <person name="Miranda M."/>
            <person name="Quach H.L."/>
            <person name="Tripp M."/>
            <person name="Chang C.H."/>
            <person name="Lee J.M."/>
            <person name="Toriumi M.J."/>
            <person name="Chan M.M."/>
            <person name="Tang C.C."/>
            <person name="Onodera C.S."/>
            <person name="Deng J.M."/>
            <person name="Akiyama K."/>
            <person name="Ansari Y."/>
            <person name="Arakawa T."/>
            <person name="Banh J."/>
            <person name="Banno F."/>
            <person name="Bowser L."/>
            <person name="Brooks S.Y."/>
            <person name="Carninci P."/>
            <person name="Chao Q."/>
            <person name="Choy N."/>
            <person name="Enju A."/>
            <person name="Goldsmith A.D."/>
            <person name="Gurjal M."/>
            <person name="Hansen N.F."/>
            <person name="Hayashizaki Y."/>
            <person name="Johnson-Hopson C."/>
            <person name="Hsuan V.W."/>
            <person name="Iida K."/>
            <person name="Karnes M."/>
            <person name="Khan S."/>
            <person name="Koesema E."/>
            <person name="Ishida J."/>
            <person name="Jiang P.X."/>
            <person name="Jones T."/>
            <person name="Kawai J."/>
            <person name="Kamiya A."/>
            <person name="Meyers C."/>
            <person name="Nakajima M."/>
            <person name="Narusaka M."/>
            <person name="Seki M."/>
            <person name="Sakurai T."/>
            <person name="Satou M."/>
            <person name="Tamse R."/>
            <person name="Vaysberg M."/>
            <person name="Wallender E.K."/>
            <person name="Wong C."/>
            <person name="Yamamura Y."/>
            <person name="Yuan S."/>
            <person name="Shinozaki K."/>
            <person name="Davis R.W."/>
            <person name="Theologis A."/>
            <person name="Ecker J.R."/>
        </authorList>
    </citation>
    <scope>NUCLEOTIDE SEQUENCE [LARGE SCALE MRNA]</scope>
    <source>
        <strain>cv. Columbia</strain>
    </source>
</reference>
<reference key="4">
    <citation type="journal article" date="2000" name="Plant Physiol.">
        <title>The cellulose synthase superfamily.</title>
        <authorList>
            <person name="Richmond T.A."/>
            <person name="Somerville C.R."/>
        </authorList>
    </citation>
    <scope>GENE FAMILY</scope>
    <scope>NOMENCLATURE</scope>
</reference>
<reference key="5">
    <citation type="journal article" date="2001" name="Plant Mol. Biol.">
        <title>Integrative approaches to determining Csl function.</title>
        <authorList>
            <person name="Richmond T.A."/>
            <person name="Somerville C.R."/>
        </authorList>
    </citation>
    <scope>TISSUE SPECIFICITY</scope>
</reference>
<comment type="function">
    <text>Thought to be a Golgi-localized beta-glycan synthase that polymerize the backbones of noncellulosic polysaccharides (hemicelluloses) of plant cell wall.</text>
</comment>
<comment type="subcellular location">
    <subcellularLocation>
        <location evidence="3">Golgi apparatus membrane</location>
        <topology evidence="3">Multi-pass membrane protein</topology>
    </subcellularLocation>
</comment>
<comment type="tissue specificity">
    <text evidence="2">Expressed in young seedlings, primarily in the vascular tissue.</text>
</comment>
<comment type="similarity">
    <text evidence="3">Belongs to the glycosyltransferase 2 family. Plant cellulose synthase-like G subfamily.</text>
</comment>
<comment type="sequence caution" evidence="3">
    <conflict type="erroneous gene model prediction">
        <sequence resource="EMBL-CDS" id="AAB63623"/>
    </conflict>
</comment>
<comment type="sequence caution" evidence="3">
    <conflict type="erroneous gene model prediction">
        <sequence resource="EMBL-CDS" id="CAB43900"/>
    </conflict>
</comment>
<comment type="sequence caution" evidence="3">
    <conflict type="erroneous gene model prediction">
        <sequence resource="EMBL-CDS" id="CAB81318"/>
    </conflict>
</comment>